<accession>B5EKJ0</accession>
<sequence>MDWLLAGLGNPGAEYARTRHNAGFWTLQTLADRVGASLRMEKRWHCLAATARASGLELGLCMPQDFMNRSGGPVQAMAAFYKVAAERILVMHDELDLPPGAARLKRGGGHGGHNGLRDLDRALGTRDYWRLRIGIGHPGHKDAVIPYVLSAPPPADKTLIDEAIERSLGVLPDFLCGRTDAAQKSLHSD</sequence>
<organism>
    <name type="scientific">Acidithiobacillus ferrooxidans (strain ATCC 53993 / BNL-5-31)</name>
    <name type="common">Leptospirillum ferrooxidans (ATCC 53993)</name>
    <dbReference type="NCBI Taxonomy" id="380394"/>
    <lineage>
        <taxon>Bacteria</taxon>
        <taxon>Pseudomonadati</taxon>
        <taxon>Pseudomonadota</taxon>
        <taxon>Acidithiobacillia</taxon>
        <taxon>Acidithiobacillales</taxon>
        <taxon>Acidithiobacillaceae</taxon>
        <taxon>Acidithiobacillus</taxon>
    </lineage>
</organism>
<reference key="1">
    <citation type="submission" date="2008-08" db="EMBL/GenBank/DDBJ databases">
        <title>Complete sequence of Acidithiobacillus ferrooxidans ATCC 53993.</title>
        <authorList>
            <person name="Lucas S."/>
            <person name="Copeland A."/>
            <person name="Lapidus A."/>
            <person name="Glavina del Rio T."/>
            <person name="Dalin E."/>
            <person name="Tice H."/>
            <person name="Bruce D."/>
            <person name="Goodwin L."/>
            <person name="Pitluck S."/>
            <person name="Sims D."/>
            <person name="Brettin T."/>
            <person name="Detter J.C."/>
            <person name="Han C."/>
            <person name="Kuske C.R."/>
            <person name="Larimer F."/>
            <person name="Land M."/>
            <person name="Hauser L."/>
            <person name="Kyrpides N."/>
            <person name="Lykidis A."/>
            <person name="Borole A.P."/>
        </authorList>
    </citation>
    <scope>NUCLEOTIDE SEQUENCE [LARGE SCALE GENOMIC DNA]</scope>
    <source>
        <strain>ATCC 53993 / BNL-5-31</strain>
    </source>
</reference>
<gene>
    <name evidence="1" type="primary">pth</name>
    <name type="ordered locus">Lferr_1804</name>
</gene>
<proteinExistence type="inferred from homology"/>
<comment type="function">
    <text evidence="1">Hydrolyzes ribosome-free peptidyl-tRNAs (with 1 or more amino acids incorporated), which drop off the ribosome during protein synthesis, or as a result of ribosome stalling.</text>
</comment>
<comment type="function">
    <text evidence="1">Catalyzes the release of premature peptidyl moieties from peptidyl-tRNA molecules trapped in stalled 50S ribosomal subunits, and thus maintains levels of free tRNAs and 50S ribosomes.</text>
</comment>
<comment type="catalytic activity">
    <reaction evidence="1">
        <text>an N-acyl-L-alpha-aminoacyl-tRNA + H2O = an N-acyl-L-amino acid + a tRNA + H(+)</text>
        <dbReference type="Rhea" id="RHEA:54448"/>
        <dbReference type="Rhea" id="RHEA-COMP:10123"/>
        <dbReference type="Rhea" id="RHEA-COMP:13883"/>
        <dbReference type="ChEBI" id="CHEBI:15377"/>
        <dbReference type="ChEBI" id="CHEBI:15378"/>
        <dbReference type="ChEBI" id="CHEBI:59874"/>
        <dbReference type="ChEBI" id="CHEBI:78442"/>
        <dbReference type="ChEBI" id="CHEBI:138191"/>
        <dbReference type="EC" id="3.1.1.29"/>
    </reaction>
</comment>
<comment type="subunit">
    <text evidence="1">Monomer.</text>
</comment>
<comment type="subcellular location">
    <subcellularLocation>
        <location evidence="1">Cytoplasm</location>
    </subcellularLocation>
</comment>
<comment type="similarity">
    <text evidence="1">Belongs to the PTH family.</text>
</comment>
<protein>
    <recommendedName>
        <fullName evidence="1">Peptidyl-tRNA hydrolase</fullName>
        <shortName evidence="1">Pth</shortName>
        <ecNumber evidence="1">3.1.1.29</ecNumber>
    </recommendedName>
</protein>
<evidence type="ECO:0000255" key="1">
    <source>
        <dbReference type="HAMAP-Rule" id="MF_00083"/>
    </source>
</evidence>
<feature type="chain" id="PRO_1000092900" description="Peptidyl-tRNA hydrolase">
    <location>
        <begin position="1"/>
        <end position="189"/>
    </location>
</feature>
<feature type="active site" description="Proton acceptor" evidence="1">
    <location>
        <position position="20"/>
    </location>
</feature>
<feature type="binding site" evidence="1">
    <location>
        <position position="15"/>
    </location>
    <ligand>
        <name>tRNA</name>
        <dbReference type="ChEBI" id="CHEBI:17843"/>
    </ligand>
</feature>
<feature type="binding site" evidence="1">
    <location>
        <position position="66"/>
    </location>
    <ligand>
        <name>tRNA</name>
        <dbReference type="ChEBI" id="CHEBI:17843"/>
    </ligand>
</feature>
<feature type="binding site" evidence="1">
    <location>
        <position position="68"/>
    </location>
    <ligand>
        <name>tRNA</name>
        <dbReference type="ChEBI" id="CHEBI:17843"/>
    </ligand>
</feature>
<feature type="binding site" evidence="1">
    <location>
        <position position="114"/>
    </location>
    <ligand>
        <name>tRNA</name>
        <dbReference type="ChEBI" id="CHEBI:17843"/>
    </ligand>
</feature>
<feature type="site" description="Discriminates between blocked and unblocked aminoacyl-tRNA" evidence="1">
    <location>
        <position position="10"/>
    </location>
</feature>
<feature type="site" description="Stabilizes the basic form of H active site to accept a proton" evidence="1">
    <location>
        <position position="93"/>
    </location>
</feature>
<name>PTH_ACIF5</name>
<dbReference type="EC" id="3.1.1.29" evidence="1"/>
<dbReference type="EMBL" id="CP001132">
    <property type="protein sequence ID" value="ACH84025.1"/>
    <property type="molecule type" value="Genomic_DNA"/>
</dbReference>
<dbReference type="RefSeq" id="WP_012537005.1">
    <property type="nucleotide sequence ID" value="NC_011206.1"/>
</dbReference>
<dbReference type="SMR" id="B5EKJ0"/>
<dbReference type="GeneID" id="65281271"/>
<dbReference type="KEGG" id="afe:Lferr_1804"/>
<dbReference type="eggNOG" id="COG0193">
    <property type="taxonomic scope" value="Bacteria"/>
</dbReference>
<dbReference type="HOGENOM" id="CLU_062456_3_1_6"/>
<dbReference type="GO" id="GO:0005737">
    <property type="term" value="C:cytoplasm"/>
    <property type="evidence" value="ECO:0007669"/>
    <property type="project" value="UniProtKB-SubCell"/>
</dbReference>
<dbReference type="GO" id="GO:0004045">
    <property type="term" value="F:peptidyl-tRNA hydrolase activity"/>
    <property type="evidence" value="ECO:0007669"/>
    <property type="project" value="UniProtKB-UniRule"/>
</dbReference>
<dbReference type="GO" id="GO:0000049">
    <property type="term" value="F:tRNA binding"/>
    <property type="evidence" value="ECO:0007669"/>
    <property type="project" value="UniProtKB-UniRule"/>
</dbReference>
<dbReference type="GO" id="GO:0006515">
    <property type="term" value="P:protein quality control for misfolded or incompletely synthesized proteins"/>
    <property type="evidence" value="ECO:0007669"/>
    <property type="project" value="UniProtKB-UniRule"/>
</dbReference>
<dbReference type="GO" id="GO:0072344">
    <property type="term" value="P:rescue of stalled ribosome"/>
    <property type="evidence" value="ECO:0007669"/>
    <property type="project" value="UniProtKB-UniRule"/>
</dbReference>
<dbReference type="CDD" id="cd00462">
    <property type="entry name" value="PTH"/>
    <property type="match status" value="1"/>
</dbReference>
<dbReference type="FunFam" id="3.40.50.1470:FF:000001">
    <property type="entry name" value="Peptidyl-tRNA hydrolase"/>
    <property type="match status" value="1"/>
</dbReference>
<dbReference type="Gene3D" id="3.40.50.1470">
    <property type="entry name" value="Peptidyl-tRNA hydrolase"/>
    <property type="match status" value="1"/>
</dbReference>
<dbReference type="HAMAP" id="MF_00083">
    <property type="entry name" value="Pept_tRNA_hydro_bact"/>
    <property type="match status" value="1"/>
</dbReference>
<dbReference type="InterPro" id="IPR001328">
    <property type="entry name" value="Pept_tRNA_hydro"/>
</dbReference>
<dbReference type="InterPro" id="IPR018171">
    <property type="entry name" value="Pept_tRNA_hydro_CS"/>
</dbReference>
<dbReference type="InterPro" id="IPR036416">
    <property type="entry name" value="Pept_tRNA_hydro_sf"/>
</dbReference>
<dbReference type="NCBIfam" id="TIGR00447">
    <property type="entry name" value="pth"/>
    <property type="match status" value="1"/>
</dbReference>
<dbReference type="PANTHER" id="PTHR17224">
    <property type="entry name" value="PEPTIDYL-TRNA HYDROLASE"/>
    <property type="match status" value="1"/>
</dbReference>
<dbReference type="PANTHER" id="PTHR17224:SF1">
    <property type="entry name" value="PEPTIDYL-TRNA HYDROLASE"/>
    <property type="match status" value="1"/>
</dbReference>
<dbReference type="Pfam" id="PF01195">
    <property type="entry name" value="Pept_tRNA_hydro"/>
    <property type="match status" value="1"/>
</dbReference>
<dbReference type="SUPFAM" id="SSF53178">
    <property type="entry name" value="Peptidyl-tRNA hydrolase-like"/>
    <property type="match status" value="1"/>
</dbReference>
<dbReference type="PROSITE" id="PS01196">
    <property type="entry name" value="PEPT_TRNA_HYDROL_2"/>
    <property type="match status" value="1"/>
</dbReference>
<keyword id="KW-0963">Cytoplasm</keyword>
<keyword id="KW-0378">Hydrolase</keyword>
<keyword id="KW-0694">RNA-binding</keyword>
<keyword id="KW-0820">tRNA-binding</keyword>